<evidence type="ECO:0000255" key="1">
    <source>
        <dbReference type="HAMAP-Rule" id="MF_00095"/>
    </source>
</evidence>
<keyword id="KW-1185">Reference proteome</keyword>
<gene>
    <name evidence="1" type="primary">sfsA</name>
    <name type="ordered locus">AF_1516</name>
</gene>
<proteinExistence type="inferred from homology"/>
<comment type="similarity">
    <text evidence="1">Belongs to the SfsA family.</text>
</comment>
<feature type="chain" id="PRO_0000152322" description="Sugar fermentation stimulation protein homolog">
    <location>
        <begin position="1"/>
        <end position="219"/>
    </location>
</feature>
<organism>
    <name type="scientific">Archaeoglobus fulgidus (strain ATCC 49558 / DSM 4304 / JCM 9628 / NBRC 100126 / VC-16)</name>
    <dbReference type="NCBI Taxonomy" id="224325"/>
    <lineage>
        <taxon>Archaea</taxon>
        <taxon>Methanobacteriati</taxon>
        <taxon>Methanobacteriota</taxon>
        <taxon>Archaeoglobi</taxon>
        <taxon>Archaeoglobales</taxon>
        <taxon>Archaeoglobaceae</taxon>
        <taxon>Archaeoglobus</taxon>
    </lineage>
</organism>
<protein>
    <recommendedName>
        <fullName evidence="1">Sugar fermentation stimulation protein homolog</fullName>
    </recommendedName>
</protein>
<name>SFSA_ARCFU</name>
<accession>O28756</accession>
<reference key="1">
    <citation type="journal article" date="1997" name="Nature">
        <title>The complete genome sequence of the hyperthermophilic, sulphate-reducing archaeon Archaeoglobus fulgidus.</title>
        <authorList>
            <person name="Klenk H.-P."/>
            <person name="Clayton R.A."/>
            <person name="Tomb J.-F."/>
            <person name="White O."/>
            <person name="Nelson K.E."/>
            <person name="Ketchum K.A."/>
            <person name="Dodson R.J."/>
            <person name="Gwinn M.L."/>
            <person name="Hickey E.K."/>
            <person name="Peterson J.D."/>
            <person name="Richardson D.L."/>
            <person name="Kerlavage A.R."/>
            <person name="Graham D.E."/>
            <person name="Kyrpides N.C."/>
            <person name="Fleischmann R.D."/>
            <person name="Quackenbush J."/>
            <person name="Lee N.H."/>
            <person name="Sutton G.G."/>
            <person name="Gill S.R."/>
            <person name="Kirkness E.F."/>
            <person name="Dougherty B.A."/>
            <person name="McKenney K."/>
            <person name="Adams M.D."/>
            <person name="Loftus B.J."/>
            <person name="Peterson S.N."/>
            <person name="Reich C.I."/>
            <person name="McNeil L.K."/>
            <person name="Badger J.H."/>
            <person name="Glodek A."/>
            <person name="Zhou L."/>
            <person name="Overbeek R."/>
            <person name="Gocayne J.D."/>
            <person name="Weidman J.F."/>
            <person name="McDonald L.A."/>
            <person name="Utterback T.R."/>
            <person name="Cotton M.D."/>
            <person name="Spriggs T."/>
            <person name="Artiach P."/>
            <person name="Kaine B.P."/>
            <person name="Sykes S.M."/>
            <person name="Sadow P.W."/>
            <person name="D'Andrea K.P."/>
            <person name="Bowman C."/>
            <person name="Fujii C."/>
            <person name="Garland S.A."/>
            <person name="Mason T.M."/>
            <person name="Olsen G.J."/>
            <person name="Fraser C.M."/>
            <person name="Smith H.O."/>
            <person name="Woese C.R."/>
            <person name="Venter J.C."/>
        </authorList>
    </citation>
    <scope>NUCLEOTIDE SEQUENCE [LARGE SCALE GENOMIC DNA]</scope>
    <source>
        <strain>ATCC 49558 / DSM 4304 / JCM 9628 / NBRC 100126 / VC-16</strain>
    </source>
</reference>
<sequence>MKLFEIENAVDCRIIGRVNRFVVDVEVDGRRERAYINNTGRLKELIFEGNVGKCLTKRGGKLSYRLFAVSCEGGYALIDTQLQMRAFEVAIPKISWLDGEVRRNVKVGNSIIDYRIGESYVELKSAALKKGIYAMYPDCPTARGRKHLRLLEEIGKRSRALVVFVAALPSVRAFMPNREGDEELYRLIKRSKNVEFRSIQVEYLNGKVFLRNPDLKVVI</sequence>
<dbReference type="EMBL" id="AE000782">
    <property type="protein sequence ID" value="AAB89729.1"/>
    <property type="molecule type" value="Genomic_DNA"/>
</dbReference>
<dbReference type="PIR" id="C69439">
    <property type="entry name" value="C69439"/>
</dbReference>
<dbReference type="RefSeq" id="WP_010879013.1">
    <property type="nucleotide sequence ID" value="NC_000917.1"/>
</dbReference>
<dbReference type="SMR" id="O28756"/>
<dbReference type="STRING" id="224325.AF_1516"/>
<dbReference type="PaxDb" id="224325-AF_1516"/>
<dbReference type="DNASU" id="1484744"/>
<dbReference type="EnsemblBacteria" id="AAB89729">
    <property type="protein sequence ID" value="AAB89729"/>
    <property type="gene ID" value="AF_1516"/>
</dbReference>
<dbReference type="GeneID" id="1484744"/>
<dbReference type="KEGG" id="afu:AF_1516"/>
<dbReference type="eggNOG" id="arCOG04115">
    <property type="taxonomic scope" value="Archaea"/>
</dbReference>
<dbReference type="HOGENOM" id="CLU_052299_1_0_2"/>
<dbReference type="OrthoDB" id="34139at2157"/>
<dbReference type="PhylomeDB" id="O28756"/>
<dbReference type="Proteomes" id="UP000002199">
    <property type="component" value="Chromosome"/>
</dbReference>
<dbReference type="GO" id="GO:0003677">
    <property type="term" value="F:DNA binding"/>
    <property type="evidence" value="ECO:0007669"/>
    <property type="project" value="InterPro"/>
</dbReference>
<dbReference type="CDD" id="cd22358">
    <property type="entry name" value="SfsA-like_archaeal"/>
    <property type="match status" value="1"/>
</dbReference>
<dbReference type="Gene3D" id="2.40.50.580">
    <property type="match status" value="1"/>
</dbReference>
<dbReference type="Gene3D" id="3.40.1350.60">
    <property type="match status" value="1"/>
</dbReference>
<dbReference type="HAMAP" id="MF_00095">
    <property type="entry name" value="SfsA"/>
    <property type="match status" value="1"/>
</dbReference>
<dbReference type="InterPro" id="IPR005224">
    <property type="entry name" value="SfsA"/>
</dbReference>
<dbReference type="InterPro" id="IPR040452">
    <property type="entry name" value="SfsA_C"/>
</dbReference>
<dbReference type="InterPro" id="IPR041465">
    <property type="entry name" value="SfsA_N"/>
</dbReference>
<dbReference type="NCBIfam" id="TIGR00230">
    <property type="entry name" value="sfsA"/>
    <property type="match status" value="1"/>
</dbReference>
<dbReference type="PANTHER" id="PTHR30545">
    <property type="entry name" value="SUGAR FERMENTATION STIMULATION PROTEIN A"/>
    <property type="match status" value="1"/>
</dbReference>
<dbReference type="PANTHER" id="PTHR30545:SF2">
    <property type="entry name" value="SUGAR FERMENTATION STIMULATION PROTEIN A"/>
    <property type="match status" value="1"/>
</dbReference>
<dbReference type="Pfam" id="PF03749">
    <property type="entry name" value="SfsA"/>
    <property type="match status" value="1"/>
</dbReference>
<dbReference type="Pfam" id="PF17746">
    <property type="entry name" value="SfsA_N"/>
    <property type="match status" value="1"/>
</dbReference>